<gene>
    <name evidence="1" type="primary">pyrR</name>
    <name type="ordered locus">Caur_1890</name>
</gene>
<accession>A9WDU6</accession>
<name>PYRR_CHLAA</name>
<reference key="1">
    <citation type="journal article" date="2011" name="BMC Genomics">
        <title>Complete genome sequence of the filamentous anoxygenic phototrophic bacterium Chloroflexus aurantiacus.</title>
        <authorList>
            <person name="Tang K.H."/>
            <person name="Barry K."/>
            <person name="Chertkov O."/>
            <person name="Dalin E."/>
            <person name="Han C.S."/>
            <person name="Hauser L.J."/>
            <person name="Honchak B.M."/>
            <person name="Karbach L.E."/>
            <person name="Land M.L."/>
            <person name="Lapidus A."/>
            <person name="Larimer F.W."/>
            <person name="Mikhailova N."/>
            <person name="Pitluck S."/>
            <person name="Pierson B.K."/>
            <person name="Blankenship R.E."/>
        </authorList>
    </citation>
    <scope>NUCLEOTIDE SEQUENCE [LARGE SCALE GENOMIC DNA]</scope>
    <source>
        <strain>ATCC 29366 / DSM 635 / J-10-fl</strain>
    </source>
</reference>
<evidence type="ECO:0000255" key="1">
    <source>
        <dbReference type="HAMAP-Rule" id="MF_01219"/>
    </source>
</evidence>
<comment type="function">
    <text evidence="1">Regulates the transcription of the pyrimidine nucleotide (pyr) operon in response to exogenous pyrimidines.</text>
</comment>
<comment type="function">
    <text evidence="1">Also displays a weak uracil phosphoribosyltransferase activity which is not physiologically significant.</text>
</comment>
<comment type="catalytic activity">
    <reaction evidence="1">
        <text>UMP + diphosphate = 5-phospho-alpha-D-ribose 1-diphosphate + uracil</text>
        <dbReference type="Rhea" id="RHEA:13017"/>
        <dbReference type="ChEBI" id="CHEBI:17568"/>
        <dbReference type="ChEBI" id="CHEBI:33019"/>
        <dbReference type="ChEBI" id="CHEBI:57865"/>
        <dbReference type="ChEBI" id="CHEBI:58017"/>
        <dbReference type="EC" id="2.4.2.9"/>
    </reaction>
</comment>
<comment type="similarity">
    <text evidence="1">Belongs to the purine/pyrimidine phosphoribosyltransferase family. PyrR subfamily.</text>
</comment>
<organism>
    <name type="scientific">Chloroflexus aurantiacus (strain ATCC 29366 / DSM 635 / J-10-fl)</name>
    <dbReference type="NCBI Taxonomy" id="324602"/>
    <lineage>
        <taxon>Bacteria</taxon>
        <taxon>Bacillati</taxon>
        <taxon>Chloroflexota</taxon>
        <taxon>Chloroflexia</taxon>
        <taxon>Chloroflexales</taxon>
        <taxon>Chloroflexineae</taxon>
        <taxon>Chloroflexaceae</taxon>
        <taxon>Chloroflexus</taxon>
    </lineage>
</organism>
<feature type="chain" id="PRO_1000085648" description="Bifunctional protein PyrR">
    <location>
        <begin position="1"/>
        <end position="182"/>
    </location>
</feature>
<feature type="short sequence motif" description="PRPP-binding" evidence="1">
    <location>
        <begin position="99"/>
        <end position="111"/>
    </location>
</feature>
<proteinExistence type="inferred from homology"/>
<sequence>MGNEKQILSADEIRRALVRIAHEIDERNGGLRDVVLVGIRSRGVPLAERIAAAIADFEGTRIPVGQLDITLYRDDLKLRGPAPRVRKTDLPIDITGKTVVLVDDVLFTGRTVRAALDAIADLGRPARIQLAVLIDRGHRELPIRADFVGKNVPTSLSERVMVRLRETDGVDEVVILRGSAND</sequence>
<dbReference type="EC" id="2.4.2.9" evidence="1"/>
<dbReference type="EMBL" id="CP000909">
    <property type="protein sequence ID" value="ABY35105.1"/>
    <property type="molecule type" value="Genomic_DNA"/>
</dbReference>
<dbReference type="RefSeq" id="WP_012257759.1">
    <property type="nucleotide sequence ID" value="NC_010175.1"/>
</dbReference>
<dbReference type="RefSeq" id="YP_001635494.1">
    <property type="nucleotide sequence ID" value="NC_010175.1"/>
</dbReference>
<dbReference type="SMR" id="A9WDU6"/>
<dbReference type="FunCoup" id="A9WDU6">
    <property type="interactions" value="203"/>
</dbReference>
<dbReference type="STRING" id="324602.Caur_1890"/>
<dbReference type="EnsemblBacteria" id="ABY35105">
    <property type="protein sequence ID" value="ABY35105"/>
    <property type="gene ID" value="Caur_1890"/>
</dbReference>
<dbReference type="KEGG" id="cau:Caur_1890"/>
<dbReference type="PATRIC" id="fig|324602.8.peg.2159"/>
<dbReference type="eggNOG" id="COG2065">
    <property type="taxonomic scope" value="Bacteria"/>
</dbReference>
<dbReference type="HOGENOM" id="CLU_094234_2_1_0"/>
<dbReference type="InParanoid" id="A9WDU6"/>
<dbReference type="Proteomes" id="UP000002008">
    <property type="component" value="Chromosome"/>
</dbReference>
<dbReference type="GO" id="GO:0004845">
    <property type="term" value="F:uracil phosphoribosyltransferase activity"/>
    <property type="evidence" value="ECO:0007669"/>
    <property type="project" value="UniProtKB-UniRule"/>
</dbReference>
<dbReference type="GO" id="GO:0006355">
    <property type="term" value="P:regulation of DNA-templated transcription"/>
    <property type="evidence" value="ECO:0007669"/>
    <property type="project" value="UniProtKB-UniRule"/>
</dbReference>
<dbReference type="CDD" id="cd06223">
    <property type="entry name" value="PRTases_typeI"/>
    <property type="match status" value="1"/>
</dbReference>
<dbReference type="FunFam" id="3.40.50.2020:FF:000020">
    <property type="entry name" value="Bifunctional protein PyrR"/>
    <property type="match status" value="1"/>
</dbReference>
<dbReference type="Gene3D" id="3.40.50.2020">
    <property type="match status" value="1"/>
</dbReference>
<dbReference type="HAMAP" id="MF_01219">
    <property type="entry name" value="PyrR"/>
    <property type="match status" value="1"/>
</dbReference>
<dbReference type="InterPro" id="IPR000836">
    <property type="entry name" value="PRibTrfase_dom"/>
</dbReference>
<dbReference type="InterPro" id="IPR029057">
    <property type="entry name" value="PRTase-like"/>
</dbReference>
<dbReference type="InterPro" id="IPR023050">
    <property type="entry name" value="PyrR"/>
</dbReference>
<dbReference type="InterPro" id="IPR050137">
    <property type="entry name" value="PyrR_bifunctional"/>
</dbReference>
<dbReference type="NCBIfam" id="NF003545">
    <property type="entry name" value="PRK05205.1-1"/>
    <property type="match status" value="1"/>
</dbReference>
<dbReference type="NCBIfam" id="NF003547">
    <property type="entry name" value="PRK05205.1-3"/>
    <property type="match status" value="1"/>
</dbReference>
<dbReference type="NCBIfam" id="NF003548">
    <property type="entry name" value="PRK05205.1-4"/>
    <property type="match status" value="1"/>
</dbReference>
<dbReference type="NCBIfam" id="NF003549">
    <property type="entry name" value="PRK05205.1-5"/>
    <property type="match status" value="1"/>
</dbReference>
<dbReference type="PANTHER" id="PTHR11608">
    <property type="entry name" value="BIFUNCTIONAL PROTEIN PYRR"/>
    <property type="match status" value="1"/>
</dbReference>
<dbReference type="PANTHER" id="PTHR11608:SF0">
    <property type="entry name" value="BIFUNCTIONAL PROTEIN PYRR"/>
    <property type="match status" value="1"/>
</dbReference>
<dbReference type="Pfam" id="PF00156">
    <property type="entry name" value="Pribosyltran"/>
    <property type="match status" value="1"/>
</dbReference>
<dbReference type="SUPFAM" id="SSF53271">
    <property type="entry name" value="PRTase-like"/>
    <property type="match status" value="1"/>
</dbReference>
<keyword id="KW-0328">Glycosyltransferase</keyword>
<keyword id="KW-1185">Reference proteome</keyword>
<keyword id="KW-0804">Transcription</keyword>
<keyword id="KW-0805">Transcription regulation</keyword>
<keyword id="KW-0808">Transferase</keyword>
<protein>
    <recommendedName>
        <fullName evidence="1">Bifunctional protein PyrR</fullName>
    </recommendedName>
    <domain>
        <recommendedName>
            <fullName evidence="1">Pyrimidine operon regulatory protein</fullName>
        </recommendedName>
    </domain>
    <domain>
        <recommendedName>
            <fullName evidence="1">Uracil phosphoribosyltransferase</fullName>
            <shortName evidence="1">UPRTase</shortName>
            <ecNumber evidence="1">2.4.2.9</ecNumber>
        </recommendedName>
    </domain>
</protein>